<comment type="subcellular location">
    <subcellularLocation>
        <location evidence="3">Cell membrane</location>
        <topology evidence="1">Multi-pass membrane protein</topology>
    </subcellularLocation>
</comment>
<comment type="induction">
    <text evidence="2">Down-regulated by cystine.</text>
</comment>
<comment type="similarity">
    <text evidence="3">To H.influenzae HI_0974B.</text>
</comment>
<comment type="sequence caution" evidence="3">
    <conflict type="frameshift">
        <sequence resource="EMBL" id="M30953"/>
    </conflict>
</comment>
<name>YHDT_ECOLI</name>
<dbReference type="EMBL" id="M30953">
    <property type="status" value="NOT_ANNOTATED_CDS"/>
    <property type="molecule type" value="Genomic_DNA"/>
</dbReference>
<dbReference type="EMBL" id="M83198">
    <property type="status" value="NOT_ANNOTATED_CDS"/>
    <property type="molecule type" value="Genomic_DNA"/>
</dbReference>
<dbReference type="EMBL" id="U18997">
    <property type="protein sequence ID" value="AAA58060.1"/>
    <property type="molecule type" value="Genomic_DNA"/>
</dbReference>
<dbReference type="EMBL" id="U00096">
    <property type="protein sequence ID" value="AAC76289.1"/>
    <property type="molecule type" value="Genomic_DNA"/>
</dbReference>
<dbReference type="EMBL" id="AP009048">
    <property type="protein sequence ID" value="BAE77298.1"/>
    <property type="molecule type" value="Genomic_DNA"/>
</dbReference>
<dbReference type="PIR" id="C65118">
    <property type="entry name" value="C65118"/>
</dbReference>
<dbReference type="RefSeq" id="NP_417723.1">
    <property type="nucleotide sequence ID" value="NC_000913.3"/>
</dbReference>
<dbReference type="RefSeq" id="WP_000381173.1">
    <property type="nucleotide sequence ID" value="NZ_SSZK01000034.1"/>
</dbReference>
<dbReference type="SMR" id="P45566"/>
<dbReference type="BioGRID" id="4263369">
    <property type="interactions" value="11"/>
</dbReference>
<dbReference type="FunCoup" id="P45566">
    <property type="interactions" value="88"/>
</dbReference>
<dbReference type="STRING" id="511145.b3257"/>
<dbReference type="PaxDb" id="511145-b3257"/>
<dbReference type="DNASU" id="947762"/>
<dbReference type="EnsemblBacteria" id="AAC76289">
    <property type="protein sequence ID" value="AAC76289"/>
    <property type="gene ID" value="b3257"/>
</dbReference>
<dbReference type="GeneID" id="947762"/>
<dbReference type="KEGG" id="ecj:JW3225"/>
<dbReference type="KEGG" id="eco:b3257"/>
<dbReference type="KEGG" id="ecoc:C3026_17720"/>
<dbReference type="PATRIC" id="fig|1411691.4.peg.3471"/>
<dbReference type="EchoBASE" id="EB2680"/>
<dbReference type="eggNOG" id="COG3924">
    <property type="taxonomic scope" value="Bacteria"/>
</dbReference>
<dbReference type="HOGENOM" id="CLU_166678_1_0_6"/>
<dbReference type="InParanoid" id="P45566"/>
<dbReference type="OMA" id="WFELACL"/>
<dbReference type="OrthoDB" id="7062456at2"/>
<dbReference type="PhylomeDB" id="P45566"/>
<dbReference type="BioCyc" id="EcoCyc:G7693-MONOMER"/>
<dbReference type="PRO" id="PR:P45566"/>
<dbReference type="Proteomes" id="UP000000625">
    <property type="component" value="Chromosome"/>
</dbReference>
<dbReference type="GO" id="GO:0005886">
    <property type="term" value="C:plasma membrane"/>
    <property type="evidence" value="ECO:0007669"/>
    <property type="project" value="UniProtKB-SubCell"/>
</dbReference>
<dbReference type="InterPro" id="IPR010398">
    <property type="entry name" value="DUF997"/>
</dbReference>
<dbReference type="NCBIfam" id="NF007918">
    <property type="entry name" value="PRK10633.1"/>
    <property type="match status" value="1"/>
</dbReference>
<dbReference type="PANTHER" id="PTHR39174:SF1">
    <property type="entry name" value="INNER MEMBRANE PROTEIN"/>
    <property type="match status" value="1"/>
</dbReference>
<dbReference type="PANTHER" id="PTHR39174">
    <property type="entry name" value="INNER MEMBRANE PROTEIN-RELATED"/>
    <property type="match status" value="1"/>
</dbReference>
<dbReference type="Pfam" id="PF06196">
    <property type="entry name" value="DUF997"/>
    <property type="match status" value="1"/>
</dbReference>
<organism>
    <name type="scientific">Escherichia coli (strain K12)</name>
    <dbReference type="NCBI Taxonomy" id="83333"/>
    <lineage>
        <taxon>Bacteria</taxon>
        <taxon>Pseudomonadati</taxon>
        <taxon>Pseudomonadota</taxon>
        <taxon>Gammaproteobacteria</taxon>
        <taxon>Enterobacterales</taxon>
        <taxon>Enterobacteriaceae</taxon>
        <taxon>Escherichia</taxon>
    </lineage>
</organism>
<evidence type="ECO:0000255" key="1"/>
<evidence type="ECO:0000269" key="2">
    <source>
    </source>
</evidence>
<evidence type="ECO:0000305" key="3"/>
<protein>
    <recommendedName>
        <fullName evidence="3">Uncharacterized membrane protein YhdT</fullName>
    </recommendedName>
</protein>
<reference key="1">
    <citation type="journal article" date="1990" name="J. Bacteriol.">
        <title>Cloning, sequence, and expression of the pantothenate permease (panF) gene of Escherichia coli.</title>
        <authorList>
            <person name="Jackowski S."/>
            <person name="Alix J.-H."/>
        </authorList>
    </citation>
    <scope>NUCLEOTIDE SEQUENCE [GENOMIC DNA]</scope>
    <source>
        <strain>K12</strain>
    </source>
</reference>
<reference key="2">
    <citation type="submission" date="1992-07" db="EMBL/GenBank/DDBJ databases">
        <title>Cloning and characterization of the E. coli fabEG operon encoding subunits of acetyl-CoA carboxylase.</title>
        <authorList>
            <person name="Best E.A."/>
            <person name="Knauf V.C."/>
        </authorList>
    </citation>
    <scope>NUCLEOTIDE SEQUENCE [GENOMIC DNA]</scope>
</reference>
<reference key="3">
    <citation type="journal article" date="1997" name="Science">
        <title>The complete genome sequence of Escherichia coli K-12.</title>
        <authorList>
            <person name="Blattner F.R."/>
            <person name="Plunkett G. III"/>
            <person name="Bloch C.A."/>
            <person name="Perna N.T."/>
            <person name="Burland V."/>
            <person name="Riley M."/>
            <person name="Collado-Vides J."/>
            <person name="Glasner J.D."/>
            <person name="Rode C.K."/>
            <person name="Mayhew G.F."/>
            <person name="Gregor J."/>
            <person name="Davis N.W."/>
            <person name="Kirkpatrick H.A."/>
            <person name="Goeden M.A."/>
            <person name="Rose D.J."/>
            <person name="Mau B."/>
            <person name="Shao Y."/>
        </authorList>
    </citation>
    <scope>NUCLEOTIDE SEQUENCE [LARGE SCALE GENOMIC DNA]</scope>
    <source>
        <strain>K12 / MG1655 / ATCC 47076</strain>
    </source>
</reference>
<reference key="4">
    <citation type="journal article" date="2006" name="Mol. Syst. Biol.">
        <title>Highly accurate genome sequences of Escherichia coli K-12 strains MG1655 and W3110.</title>
        <authorList>
            <person name="Hayashi K."/>
            <person name="Morooka N."/>
            <person name="Yamamoto Y."/>
            <person name="Fujita K."/>
            <person name="Isono K."/>
            <person name="Choi S."/>
            <person name="Ohtsubo E."/>
            <person name="Baba T."/>
            <person name="Wanner B.L."/>
            <person name="Mori H."/>
            <person name="Horiuchi T."/>
        </authorList>
    </citation>
    <scope>NUCLEOTIDE SEQUENCE [LARGE SCALE GENOMIC DNA]</scope>
    <source>
        <strain>K12 / W3110 / ATCC 27325 / DSM 5911</strain>
    </source>
</reference>
<reference key="5">
    <citation type="journal article" date="2015" name="Biosci. Biotechnol. Biochem.">
        <title>Induction of the Escherichia coli yijE gene expression by cystine.</title>
        <authorList>
            <person name="Yamamoto K."/>
            <person name="Nonaka G."/>
            <person name="Ozawa T."/>
            <person name="Takumi K."/>
            <person name="Ishihama A."/>
        </authorList>
    </citation>
    <scope>INDUCTION</scope>
    <source>
        <strain>K12 / BW25113</strain>
    </source>
</reference>
<gene>
    <name type="primary">yhdT</name>
    <name type="ordered locus">b3257</name>
    <name type="ordered locus">JW3225</name>
</gene>
<proteinExistence type="evidence at transcript level"/>
<feature type="chain" id="PRO_0000169497" description="Uncharacterized membrane protein YhdT">
    <location>
        <begin position="1"/>
        <end position="80"/>
    </location>
</feature>
<feature type="transmembrane region" description="Helical" evidence="1">
    <location>
        <begin position="15"/>
        <end position="35"/>
    </location>
</feature>
<feature type="transmembrane region" description="Helical" evidence="1">
    <location>
        <begin position="45"/>
        <end position="65"/>
    </location>
</feature>
<accession>P45566</accession>
<accession>Q2M8V8</accession>
<keyword id="KW-1003">Cell membrane</keyword>
<keyword id="KW-0472">Membrane</keyword>
<keyword id="KW-1185">Reference proteome</keyword>
<keyword id="KW-0812">Transmembrane</keyword>
<keyword id="KW-1133">Transmembrane helix</keyword>
<sequence>MDTRFVQAHKEARWALGLTLLYLAVWLVAAYLSGVAPGFTGFPRWFEMACILTPLLFIGLCWAMVKFIYRDIPLEDDDAA</sequence>